<proteinExistence type="evidence at transcript level"/>
<reference key="1">
    <citation type="journal article" date="1999" name="Plant Cell Physiol.">
        <title>Differential light regulation of the rbcS gene expression in two cell lines of the liverwort Marchantia paleacea var. diptera.</title>
        <authorList>
            <person name="Suzuki T."/>
            <person name="Takio S."/>
            <person name="Tanaka K."/>
            <person name="Yamamoto I."/>
            <person name="Satoh T."/>
        </authorList>
    </citation>
    <scope>NUCLEOTIDE SEQUENCE [MRNA]</scope>
    <source>
        <strain>var. diptera</strain>
        <tissue>Callus</tissue>
    </source>
</reference>
<dbReference type="EMBL" id="AB004883">
    <property type="protein sequence ID" value="BAA28610.1"/>
    <property type="molecule type" value="mRNA"/>
</dbReference>
<dbReference type="SMR" id="O64416"/>
<dbReference type="GO" id="GO:0009507">
    <property type="term" value="C:chloroplast"/>
    <property type="evidence" value="ECO:0007669"/>
    <property type="project" value="UniProtKB-SubCell"/>
</dbReference>
<dbReference type="GO" id="GO:0016984">
    <property type="term" value="F:ribulose-bisphosphate carboxylase activity"/>
    <property type="evidence" value="ECO:0007669"/>
    <property type="project" value="UniProtKB-UniRule"/>
</dbReference>
<dbReference type="GO" id="GO:0009853">
    <property type="term" value="P:photorespiration"/>
    <property type="evidence" value="ECO:0007669"/>
    <property type="project" value="UniProtKB-KW"/>
</dbReference>
<dbReference type="GO" id="GO:0019253">
    <property type="term" value="P:reductive pentose-phosphate cycle"/>
    <property type="evidence" value="ECO:0007669"/>
    <property type="project" value="UniProtKB-UniRule"/>
</dbReference>
<dbReference type="CDD" id="cd03527">
    <property type="entry name" value="RuBisCO_small"/>
    <property type="match status" value="1"/>
</dbReference>
<dbReference type="FunFam" id="3.30.190.10:FF:000001">
    <property type="entry name" value="Ribulose bisphosphate carboxylase small chain, chloroplastic"/>
    <property type="match status" value="1"/>
</dbReference>
<dbReference type="Gene3D" id="3.30.190.10">
    <property type="entry name" value="Ribulose bisphosphate carboxylase, small subunit"/>
    <property type="match status" value="1"/>
</dbReference>
<dbReference type="HAMAP" id="MF_00859">
    <property type="entry name" value="RuBisCO_S_bact"/>
    <property type="match status" value="1"/>
</dbReference>
<dbReference type="InterPro" id="IPR024681">
    <property type="entry name" value="RuBisCO_ssu"/>
</dbReference>
<dbReference type="InterPro" id="IPR000894">
    <property type="entry name" value="RuBisCO_ssu_dom"/>
</dbReference>
<dbReference type="InterPro" id="IPR036385">
    <property type="entry name" value="RuBisCO_ssu_sf"/>
</dbReference>
<dbReference type="PANTHER" id="PTHR31262">
    <property type="entry name" value="RIBULOSE BISPHOSPHATE CARBOXYLASE SMALL CHAIN 1, CHLOROPLASTIC"/>
    <property type="match status" value="1"/>
</dbReference>
<dbReference type="PANTHER" id="PTHR31262:SF0">
    <property type="entry name" value="RIBULOSE BISPHOSPHATE CARBOXYLASE SMALL SUBUNIT, CHLOROPLASTIC 1"/>
    <property type="match status" value="1"/>
</dbReference>
<dbReference type="Pfam" id="PF00101">
    <property type="entry name" value="RuBisCO_small"/>
    <property type="match status" value="1"/>
</dbReference>
<dbReference type="PRINTS" id="PR00152">
    <property type="entry name" value="RUBISCOSMALL"/>
</dbReference>
<dbReference type="SMART" id="SM00961">
    <property type="entry name" value="RuBisCO_small"/>
    <property type="match status" value="1"/>
</dbReference>
<dbReference type="SUPFAM" id="SSF55239">
    <property type="entry name" value="RuBisCO, small subunit"/>
    <property type="match status" value="1"/>
</dbReference>
<sequence>MASVVASAAVVTPFAASAASTTKSSQIVSVQAGLKAGVFGGKSEWQTKTQTNGSRVSCMQVWEPYNNLKFETLSYLPPLSQDALAKQIDYVIKSGWAPCIEFDVQGTVTREGSTMPGYYDGRYWTMWKLPMFGCTDSASVLREIEECKKLYGKKCYIRCLGFDNTRQVQCASFIVHQPTL</sequence>
<keyword id="KW-0113">Calvin cycle</keyword>
<keyword id="KW-0120">Carbon dioxide fixation</keyword>
<keyword id="KW-0150">Chloroplast</keyword>
<keyword id="KW-0601">Photorespiration</keyword>
<keyword id="KW-0602">Photosynthesis</keyword>
<keyword id="KW-0934">Plastid</keyword>
<keyword id="KW-0809">Transit peptide</keyword>
<organism>
    <name type="scientific">Marchantia paleacea</name>
    <name type="common">Liverwort</name>
    <dbReference type="NCBI Taxonomy" id="56867"/>
    <lineage>
        <taxon>Eukaryota</taxon>
        <taxon>Viridiplantae</taxon>
        <taxon>Streptophyta</taxon>
        <taxon>Embryophyta</taxon>
        <taxon>Marchantiophyta</taxon>
        <taxon>Marchantiopsida</taxon>
        <taxon>Marchantiidae</taxon>
        <taxon>Marchantiales</taxon>
        <taxon>Marchantiaceae</taxon>
        <taxon>Marchantia</taxon>
    </lineage>
</organism>
<evidence type="ECO:0000255" key="1">
    <source>
        <dbReference type="HAMAP-Rule" id="MF_00860"/>
    </source>
</evidence>
<name>RBS_MARPA</name>
<accession>O64416</accession>
<comment type="function">
    <text evidence="1">RuBisCO catalyzes two reactions: the carboxylation of D-ribulose 1,5-bisphosphate, the primary event in carbon dioxide fixation, as well as the oxidative fragmentation of the pentose substrate. Both reactions occur simultaneously and in competition at the same active site. Although the small subunit is not catalytic it is essential for maximal activity.</text>
</comment>
<comment type="subunit">
    <text evidence="1">Heterohexadecamer of 8 large and 8 small subunits.</text>
</comment>
<comment type="subcellular location">
    <subcellularLocation>
        <location evidence="1">Plastid</location>
        <location evidence="1">Chloroplast</location>
    </subcellularLocation>
</comment>
<comment type="miscellaneous">
    <text evidence="1">The basic functional RuBisCO is composed of a large chain homodimer in a 'head-to-tail' conformation. In form I RuBisCO this homodimer is arranged in a barrel-like tetramer with the small subunits forming a tetrameric 'cap' on each end of the 'barrel'.</text>
</comment>
<comment type="similarity">
    <text evidence="1">Belongs to the RuBisCO small chain family.</text>
</comment>
<feature type="transit peptide" description="Chloroplast" evidence="1">
    <location>
        <begin position="1"/>
        <end position="57"/>
    </location>
</feature>
<feature type="chain" id="PRO_0000031525" description="Ribulose bisphosphate carboxylase small subunit, chloroplastic" evidence="1">
    <location>
        <begin position="58"/>
        <end position="180"/>
    </location>
</feature>
<gene>
    <name evidence="1" type="primary">RBCS</name>
</gene>
<protein>
    <recommendedName>
        <fullName evidence="1">Ribulose bisphosphate carboxylase small subunit, chloroplastic</fullName>
        <shortName evidence="1">RuBisCO small subunit</shortName>
    </recommendedName>
</protein>